<keyword id="KW-0025">Alternative splicing</keyword>
<keyword id="KW-0217">Developmental protein</keyword>
<keyword id="KW-0238">DNA-binding</keyword>
<keyword id="KW-0539">Nucleus</keyword>
<keyword id="KW-0562">Pair-rule protein</keyword>
<keyword id="KW-0597">Phosphoprotein</keyword>
<keyword id="KW-1185">Reference proteome</keyword>
<keyword id="KW-0804">Transcription</keyword>
<keyword id="KW-0805">Transcription regulation</keyword>
<reference evidence="18 20" key="1">
    <citation type="journal article" date="2001" name="Development">
        <title>Lilliputian: an AF4/FMR2-related protein that controls cell identity and cell growth.</title>
        <authorList>
            <person name="Wittwer F."/>
            <person name="van der Straten A."/>
            <person name="Keleman K."/>
            <person name="Dickson B.J."/>
            <person name="Hafen E."/>
        </authorList>
    </citation>
    <scope>NUCLEOTIDE SEQUENCE [MRNA] (ISOFORM A)</scope>
    <scope>FUNCTION</scope>
    <scope>SUBCELLULAR LOCATION</scope>
    <scope>DEVELOPMENTAL STAGE</scope>
    <scope>DISRUPTION PHENOTYPE</scope>
</reference>
<reference evidence="18 21" key="2">
    <citation type="journal article" date="2001" name="Development">
        <title>Transcriptional regulation of cytoskeletal functions and segmentation by a novel maternal pair-rule gene, lilliputian.</title>
        <authorList>
            <person name="Tang A.H."/>
            <person name="Neufeld T.P."/>
            <person name="Rubin G.M."/>
            <person name="Muller H.A."/>
        </authorList>
    </citation>
    <scope>NUCLEOTIDE SEQUENCE [MRNA] (ISOFORM A)</scope>
    <scope>FUNCTION</scope>
    <scope>DEVELOPMENTAL STAGE</scope>
    <scope>DISRUPTION PHENOTYPE</scope>
</reference>
<reference evidence="19" key="3">
    <citation type="journal article" date="2000" name="Science">
        <title>The genome sequence of Drosophila melanogaster.</title>
        <authorList>
            <person name="Adams M.D."/>
            <person name="Celniker S.E."/>
            <person name="Holt R.A."/>
            <person name="Evans C.A."/>
            <person name="Gocayne J.D."/>
            <person name="Amanatides P.G."/>
            <person name="Scherer S.E."/>
            <person name="Li P.W."/>
            <person name="Hoskins R.A."/>
            <person name="Galle R.F."/>
            <person name="George R.A."/>
            <person name="Lewis S.E."/>
            <person name="Richards S."/>
            <person name="Ashburner M."/>
            <person name="Henderson S.N."/>
            <person name="Sutton G.G."/>
            <person name="Wortman J.R."/>
            <person name="Yandell M.D."/>
            <person name="Zhang Q."/>
            <person name="Chen L.X."/>
            <person name="Brandon R.C."/>
            <person name="Rogers Y.-H.C."/>
            <person name="Blazej R.G."/>
            <person name="Champe M."/>
            <person name="Pfeiffer B.D."/>
            <person name="Wan K.H."/>
            <person name="Doyle C."/>
            <person name="Baxter E.G."/>
            <person name="Helt G."/>
            <person name="Nelson C.R."/>
            <person name="Miklos G.L.G."/>
            <person name="Abril J.F."/>
            <person name="Agbayani A."/>
            <person name="An H.-J."/>
            <person name="Andrews-Pfannkoch C."/>
            <person name="Baldwin D."/>
            <person name="Ballew R.M."/>
            <person name="Basu A."/>
            <person name="Baxendale J."/>
            <person name="Bayraktaroglu L."/>
            <person name="Beasley E.M."/>
            <person name="Beeson K.Y."/>
            <person name="Benos P.V."/>
            <person name="Berman B.P."/>
            <person name="Bhandari D."/>
            <person name="Bolshakov S."/>
            <person name="Borkova D."/>
            <person name="Botchan M.R."/>
            <person name="Bouck J."/>
            <person name="Brokstein P."/>
            <person name="Brottier P."/>
            <person name="Burtis K.C."/>
            <person name="Busam D.A."/>
            <person name="Butler H."/>
            <person name="Cadieu E."/>
            <person name="Center A."/>
            <person name="Chandra I."/>
            <person name="Cherry J.M."/>
            <person name="Cawley S."/>
            <person name="Dahlke C."/>
            <person name="Davenport L.B."/>
            <person name="Davies P."/>
            <person name="de Pablos B."/>
            <person name="Delcher A."/>
            <person name="Deng Z."/>
            <person name="Mays A.D."/>
            <person name="Dew I."/>
            <person name="Dietz S.M."/>
            <person name="Dodson K."/>
            <person name="Doup L.E."/>
            <person name="Downes M."/>
            <person name="Dugan-Rocha S."/>
            <person name="Dunkov B.C."/>
            <person name="Dunn P."/>
            <person name="Durbin K.J."/>
            <person name="Evangelista C.C."/>
            <person name="Ferraz C."/>
            <person name="Ferriera S."/>
            <person name="Fleischmann W."/>
            <person name="Fosler C."/>
            <person name="Gabrielian A.E."/>
            <person name="Garg N.S."/>
            <person name="Gelbart W.M."/>
            <person name="Glasser K."/>
            <person name="Glodek A."/>
            <person name="Gong F."/>
            <person name="Gorrell J.H."/>
            <person name="Gu Z."/>
            <person name="Guan P."/>
            <person name="Harris M."/>
            <person name="Harris N.L."/>
            <person name="Harvey D.A."/>
            <person name="Heiman T.J."/>
            <person name="Hernandez J.R."/>
            <person name="Houck J."/>
            <person name="Hostin D."/>
            <person name="Houston K.A."/>
            <person name="Howland T.J."/>
            <person name="Wei M.-H."/>
            <person name="Ibegwam C."/>
            <person name="Jalali M."/>
            <person name="Kalush F."/>
            <person name="Karpen G.H."/>
            <person name="Ke Z."/>
            <person name="Kennison J.A."/>
            <person name="Ketchum K.A."/>
            <person name="Kimmel B.E."/>
            <person name="Kodira C.D."/>
            <person name="Kraft C.L."/>
            <person name="Kravitz S."/>
            <person name="Kulp D."/>
            <person name="Lai Z."/>
            <person name="Lasko P."/>
            <person name="Lei Y."/>
            <person name="Levitsky A.A."/>
            <person name="Li J.H."/>
            <person name="Li Z."/>
            <person name="Liang Y."/>
            <person name="Lin X."/>
            <person name="Liu X."/>
            <person name="Mattei B."/>
            <person name="McIntosh T.C."/>
            <person name="McLeod M.P."/>
            <person name="McPherson D."/>
            <person name="Merkulov G."/>
            <person name="Milshina N.V."/>
            <person name="Mobarry C."/>
            <person name="Morris J."/>
            <person name="Moshrefi A."/>
            <person name="Mount S.M."/>
            <person name="Moy M."/>
            <person name="Murphy B."/>
            <person name="Murphy L."/>
            <person name="Muzny D.M."/>
            <person name="Nelson D.L."/>
            <person name="Nelson D.R."/>
            <person name="Nelson K.A."/>
            <person name="Nixon K."/>
            <person name="Nusskern D.R."/>
            <person name="Pacleb J.M."/>
            <person name="Palazzolo M."/>
            <person name="Pittman G.S."/>
            <person name="Pan S."/>
            <person name="Pollard J."/>
            <person name="Puri V."/>
            <person name="Reese M.G."/>
            <person name="Reinert K."/>
            <person name="Remington K."/>
            <person name="Saunders R.D.C."/>
            <person name="Scheeler F."/>
            <person name="Shen H."/>
            <person name="Shue B.C."/>
            <person name="Siden-Kiamos I."/>
            <person name="Simpson M."/>
            <person name="Skupski M.P."/>
            <person name="Smith T.J."/>
            <person name="Spier E."/>
            <person name="Spradling A.C."/>
            <person name="Stapleton M."/>
            <person name="Strong R."/>
            <person name="Sun E."/>
            <person name="Svirskas R."/>
            <person name="Tector C."/>
            <person name="Turner R."/>
            <person name="Venter E."/>
            <person name="Wang A.H."/>
            <person name="Wang X."/>
            <person name="Wang Z.-Y."/>
            <person name="Wassarman D.A."/>
            <person name="Weinstock G.M."/>
            <person name="Weissenbach J."/>
            <person name="Williams S.M."/>
            <person name="Woodage T."/>
            <person name="Worley K.C."/>
            <person name="Wu D."/>
            <person name="Yang S."/>
            <person name="Yao Q.A."/>
            <person name="Ye J."/>
            <person name="Yeh R.-F."/>
            <person name="Zaveri J.S."/>
            <person name="Zhan M."/>
            <person name="Zhang G."/>
            <person name="Zhao Q."/>
            <person name="Zheng L."/>
            <person name="Zheng X.H."/>
            <person name="Zhong F.N."/>
            <person name="Zhong W."/>
            <person name="Zhou X."/>
            <person name="Zhu S.C."/>
            <person name="Zhu X."/>
            <person name="Smith H.O."/>
            <person name="Gibbs R.A."/>
            <person name="Myers E.W."/>
            <person name="Rubin G.M."/>
            <person name="Venter J.C."/>
        </authorList>
    </citation>
    <scope>NUCLEOTIDE SEQUENCE [LARGE SCALE GENOMIC DNA]</scope>
    <source>
        <strain>Berkeley</strain>
    </source>
</reference>
<reference evidence="18 19" key="4">
    <citation type="journal article" date="2002" name="Genome Biol.">
        <title>Annotation of the Drosophila melanogaster euchromatic genome: a systematic review.</title>
        <authorList>
            <person name="Misra S."/>
            <person name="Crosby M.A."/>
            <person name="Mungall C.J."/>
            <person name="Matthews B.B."/>
            <person name="Campbell K.S."/>
            <person name="Hradecky P."/>
            <person name="Huang Y."/>
            <person name="Kaminker J.S."/>
            <person name="Millburn G.H."/>
            <person name="Prochnik S.E."/>
            <person name="Smith C.D."/>
            <person name="Tupy J.L."/>
            <person name="Whitfield E.J."/>
            <person name="Bayraktaroglu L."/>
            <person name="Berman B.P."/>
            <person name="Bettencourt B.R."/>
            <person name="Celniker S.E."/>
            <person name="de Grey A.D.N.J."/>
            <person name="Drysdale R.A."/>
            <person name="Harris N.L."/>
            <person name="Richter J."/>
            <person name="Russo S."/>
            <person name="Schroeder A.J."/>
            <person name="Shu S.Q."/>
            <person name="Stapleton M."/>
            <person name="Yamada C."/>
            <person name="Ashburner M."/>
            <person name="Gelbart W.M."/>
            <person name="Rubin G.M."/>
            <person name="Lewis S.E."/>
        </authorList>
    </citation>
    <scope>GENOME REANNOTATION</scope>
    <scope>ALTERNATIVE SPLICING</scope>
    <source>
        <strain>Berkeley</strain>
    </source>
</reference>
<reference evidence="18 23" key="5">
    <citation type="submission" date="2009-10" db="EMBL/GenBank/DDBJ databases">
        <authorList>
            <person name="Carlson J.W."/>
            <person name="Booth B."/>
            <person name="Frise E."/>
            <person name="Park S."/>
            <person name="Wan K.H."/>
            <person name="Yu C."/>
            <person name="Celniker S.E."/>
        </authorList>
    </citation>
    <scope>NUCLEOTIDE SEQUENCE [LARGE SCALE MRNA] (ISOFORM D)</scope>
    <source>
        <strain>Berkeley</strain>
        <tissue>Testis</tissue>
    </source>
</reference>
<reference evidence="18 22" key="6">
    <citation type="journal article" date="2002" name="Genome Biol.">
        <title>A Drosophila full-length cDNA resource.</title>
        <authorList>
            <person name="Stapleton M."/>
            <person name="Carlson J.W."/>
            <person name="Brokstein P."/>
            <person name="Yu C."/>
            <person name="Champe M."/>
            <person name="George R.A."/>
            <person name="Guarin H."/>
            <person name="Kronmiller B."/>
            <person name="Pacleb J.M."/>
            <person name="Park S."/>
            <person name="Wan K.H."/>
            <person name="Rubin G.M."/>
            <person name="Celniker S.E."/>
        </authorList>
    </citation>
    <scope>NUCLEOTIDE SEQUENCE [LARGE SCALE MRNA] OF 1374-1673 (ISOFORMS A/D)</scope>
    <source>
        <strain evidence="22">Berkeley</strain>
        <tissue evidence="6">Embryo</tissue>
    </source>
</reference>
<reference evidence="18" key="7">
    <citation type="journal article" date="1996" name="Genetics">
        <title>Mutations Modulating Raf signaling in Drosophila eye development.</title>
        <authorList>
            <person name="Dickson B.J."/>
            <person name="van der Straten A."/>
            <person name="Dominguez M."/>
            <person name="Hafen E."/>
        </authorList>
    </citation>
    <scope>FUNCTION</scope>
</reference>
<reference evidence="18" key="8">
    <citation type="journal article" date="1996" name="Genetics">
        <title>Zygotic lethal mutations with maternal effect phenotypes in Drosophila melanogaster. II. Loci on the second and third chromosomes identified by P-element-induced mutations.</title>
        <authorList>
            <person name="Perrimon N."/>
            <person name="Lanjuin A."/>
            <person name="Arnold C."/>
            <person name="Noll E."/>
        </authorList>
    </citation>
    <scope>FUNCTION</scope>
</reference>
<reference evidence="18" key="9">
    <citation type="journal article" date="1998" name="Genetics">
        <title>A genetic screen to identify components of the sina signaling pathway in Drosophila eye development.</title>
        <authorList>
            <person name="Neufeld T.P."/>
            <person name="Tang A.H."/>
            <person name="Rubin G.M."/>
        </authorList>
    </citation>
    <scope>FUNCTION</scope>
</reference>
<reference evidence="18" key="10">
    <citation type="journal article" date="2008" name="J. Proteome Res.">
        <title>Phosphoproteome analysis of Drosophila melanogaster embryos.</title>
        <authorList>
            <person name="Zhai B."/>
            <person name="Villen J."/>
            <person name="Beausoleil S.A."/>
            <person name="Mintseris J."/>
            <person name="Gygi S.P."/>
        </authorList>
    </citation>
    <scope>PHOSPHORYLATION [LARGE SCALE ANALYSIS] AT THR-420; SER-450; SER-452; SER-821; SER-822; SER-871; SER-873; SER-1362 AND THR-1364</scope>
    <scope>IDENTIFICATION BY MASS SPECTROMETRY</scope>
    <source>
        <tissue evidence="7">Embryo</tissue>
    </source>
</reference>
<reference key="11">
    <citation type="journal article" date="2011" name="Mol. Cell">
        <title>The little elongation complex regulates small nuclear RNA transcription.</title>
        <authorList>
            <person name="Smith E.R."/>
            <person name="Lin C."/>
            <person name="Garrett A.S."/>
            <person name="Thornton J."/>
            <person name="Mohaghegh N."/>
            <person name="Hu D."/>
            <person name="Jackson J."/>
            <person name="Saraf A."/>
            <person name="Swanson S.K."/>
            <person name="Seidel C."/>
            <person name="Florens L."/>
            <person name="Washburn M.P."/>
            <person name="Eissenberg J.C."/>
            <person name="Shilatifard A."/>
        </authorList>
    </citation>
    <scope>IDENTIFICATION IN THE SEC COMPLEX</scope>
    <scope>SUBCELLULAR LOCATION</scope>
</reference>
<gene>
    <name evidence="19 24" type="primary">lilli</name>
    <name evidence="15" type="synonym">l(2)00632</name>
    <name evidence="16" type="synonym">SS2-1</name>
    <name evidence="14" type="synonym">Su(Raf)2A</name>
    <name type="ORF">CG8817</name>
</gene>
<accession>Q9VQI9</accession>
<accession>B7YZZ6</accession>
<accession>C9QPD1</accession>
<accession>Q95RP2</accession>
<accession>Q9BH66</accession>
<dbReference type="EMBL" id="AF293971">
    <property type="protein sequence ID" value="AAG53639.1"/>
    <property type="molecule type" value="mRNA"/>
</dbReference>
<dbReference type="EMBL" id="AF289034">
    <property type="protein sequence ID" value="AAK18163.1"/>
    <property type="molecule type" value="mRNA"/>
</dbReference>
<dbReference type="EMBL" id="AE014134">
    <property type="protein sequence ID" value="AAF51180.2"/>
    <property type="molecule type" value="Genomic_DNA"/>
</dbReference>
<dbReference type="EMBL" id="AE014134">
    <property type="protein sequence ID" value="AAN10399.1"/>
    <property type="molecule type" value="Genomic_DNA"/>
</dbReference>
<dbReference type="EMBL" id="AE014134">
    <property type="protein sequence ID" value="AAN10400.1"/>
    <property type="molecule type" value="Genomic_DNA"/>
</dbReference>
<dbReference type="EMBL" id="AE014134">
    <property type="protein sequence ID" value="ACL82979.1"/>
    <property type="molecule type" value="Genomic_DNA"/>
</dbReference>
<dbReference type="EMBL" id="AE014134">
    <property type="protein sequence ID" value="ACL82980.1"/>
    <property type="molecule type" value="Genomic_DNA"/>
</dbReference>
<dbReference type="EMBL" id="AE014134">
    <property type="protein sequence ID" value="ACL82981.1"/>
    <property type="molecule type" value="Genomic_DNA"/>
</dbReference>
<dbReference type="EMBL" id="AE014134">
    <property type="protein sequence ID" value="ACL82982.1"/>
    <property type="molecule type" value="Genomic_DNA"/>
</dbReference>
<dbReference type="EMBL" id="BT100013">
    <property type="protein sequence ID" value="ACX54921.1"/>
    <property type="status" value="ALT_FRAME"/>
    <property type="molecule type" value="mRNA"/>
</dbReference>
<dbReference type="EMBL" id="AY061238">
    <property type="protein sequence ID" value="AAL28786.1"/>
    <property type="status" value="ALT_INIT"/>
    <property type="molecule type" value="mRNA"/>
</dbReference>
<dbReference type="RefSeq" id="NP_001137772.1">
    <molecule id="Q9VQI9-2"/>
    <property type="nucleotide sequence ID" value="NM_001144300.2"/>
</dbReference>
<dbReference type="RefSeq" id="NP_001137773.1">
    <molecule id="Q9VQI9-2"/>
    <property type="nucleotide sequence ID" value="NM_001144301.1"/>
</dbReference>
<dbReference type="RefSeq" id="NP_001137774.1">
    <molecule id="Q9VQI9-2"/>
    <property type="nucleotide sequence ID" value="NM_001144302.2"/>
</dbReference>
<dbReference type="RefSeq" id="NP_001137775.1">
    <molecule id="Q9VQI9-1"/>
    <property type="nucleotide sequence ID" value="NM_001144303.1"/>
</dbReference>
<dbReference type="RefSeq" id="NP_001259973.1">
    <molecule id="Q9VQI9-2"/>
    <property type="nucleotide sequence ID" value="NM_001273044.1"/>
</dbReference>
<dbReference type="RefSeq" id="NP_523464.1">
    <molecule id="Q9VQI9-1"/>
    <property type="nucleotide sequence ID" value="NM_078740.3"/>
</dbReference>
<dbReference type="RefSeq" id="NP_722863.1">
    <molecule id="Q9VQI9-1"/>
    <property type="nucleotide sequence ID" value="NM_164516.2"/>
</dbReference>
<dbReference type="RefSeq" id="NP_722864.1">
    <molecule id="Q9VQI9-1"/>
    <property type="nucleotide sequence ID" value="NM_164517.1"/>
</dbReference>
<dbReference type="SMR" id="Q9VQI9"/>
<dbReference type="BioGRID" id="59717">
    <property type="interactions" value="40"/>
</dbReference>
<dbReference type="ComplexPortal" id="CPX-2711">
    <property type="entry name" value="Super elongation complex"/>
</dbReference>
<dbReference type="FunCoup" id="Q9VQI9">
    <property type="interactions" value="260"/>
</dbReference>
<dbReference type="IntAct" id="Q9VQI9">
    <property type="interactions" value="12"/>
</dbReference>
<dbReference type="STRING" id="7227.FBpp0077318"/>
<dbReference type="GlyGen" id="Q9VQI9">
    <property type="glycosylation" value="5 sites, 1 O-linked glycan (1 site)"/>
</dbReference>
<dbReference type="iPTMnet" id="Q9VQI9"/>
<dbReference type="PaxDb" id="7227-FBpp0077318"/>
<dbReference type="EnsemblMetazoa" id="FBtr0077632">
    <molecule id="Q9VQI9-1"/>
    <property type="protein sequence ID" value="FBpp0077317"/>
    <property type="gene ID" value="FBgn0041111"/>
</dbReference>
<dbReference type="EnsemblMetazoa" id="FBtr0077633">
    <molecule id="Q9VQI9-1"/>
    <property type="protein sequence ID" value="FBpp0077318"/>
    <property type="gene ID" value="FBgn0041111"/>
</dbReference>
<dbReference type="EnsemblMetazoa" id="FBtr0077634">
    <molecule id="Q9VQI9-1"/>
    <property type="protein sequence ID" value="FBpp0077319"/>
    <property type="gene ID" value="FBgn0041111"/>
</dbReference>
<dbReference type="EnsemblMetazoa" id="FBtr0290038">
    <molecule id="Q9VQI9-2"/>
    <property type="protein sequence ID" value="FBpp0288477"/>
    <property type="gene ID" value="FBgn0041111"/>
</dbReference>
<dbReference type="EnsemblMetazoa" id="FBtr0290039">
    <molecule id="Q9VQI9-2"/>
    <property type="protein sequence ID" value="FBpp0288478"/>
    <property type="gene ID" value="FBgn0041111"/>
</dbReference>
<dbReference type="EnsemblMetazoa" id="FBtr0290040">
    <molecule id="Q9VQI9-2"/>
    <property type="protein sequence ID" value="FBpp0288479"/>
    <property type="gene ID" value="FBgn0041111"/>
</dbReference>
<dbReference type="EnsemblMetazoa" id="FBtr0290041">
    <molecule id="Q9VQI9-1"/>
    <property type="protein sequence ID" value="FBpp0288480"/>
    <property type="gene ID" value="FBgn0041111"/>
</dbReference>
<dbReference type="EnsemblMetazoa" id="FBtr0332458">
    <molecule id="Q9VQI9-2"/>
    <property type="protein sequence ID" value="FBpp0304731"/>
    <property type="gene ID" value="FBgn0041111"/>
</dbReference>
<dbReference type="GeneID" id="33496"/>
<dbReference type="KEGG" id="dme:Dmel_CG8817"/>
<dbReference type="UCSC" id="CG8817-RA">
    <molecule id="Q9VQI9-1"/>
    <property type="organism name" value="d. melanogaster"/>
</dbReference>
<dbReference type="AGR" id="FB:FBgn0041111"/>
<dbReference type="CTD" id="33496"/>
<dbReference type="FlyBase" id="FBgn0041111">
    <property type="gene designation" value="lilli"/>
</dbReference>
<dbReference type="VEuPathDB" id="VectorBase:FBgn0041111"/>
<dbReference type="eggNOG" id="ENOG502QR32">
    <property type="taxonomic scope" value="Eukaryota"/>
</dbReference>
<dbReference type="GeneTree" id="ENSGT00950000182974"/>
<dbReference type="InParanoid" id="Q9VQI9"/>
<dbReference type="OMA" id="NMEATWT"/>
<dbReference type="OrthoDB" id="6382204at2759"/>
<dbReference type="PhylomeDB" id="Q9VQI9"/>
<dbReference type="Reactome" id="R-DME-112382">
    <property type="pathway name" value="Formation of RNA Pol II elongation complex"/>
</dbReference>
<dbReference type="Reactome" id="R-DME-674695">
    <property type="pathway name" value="RNA Polymerase II Pre-transcription Events"/>
</dbReference>
<dbReference type="Reactome" id="R-DME-75955">
    <property type="pathway name" value="RNA Polymerase II Transcription Elongation"/>
</dbReference>
<dbReference type="BioGRID-ORCS" id="33496">
    <property type="hits" value="0 hits in 3 CRISPR screens"/>
</dbReference>
<dbReference type="ChiTaRS" id="lilli">
    <property type="organism name" value="fly"/>
</dbReference>
<dbReference type="GenomeRNAi" id="33496"/>
<dbReference type="PRO" id="PR:Q9VQI9"/>
<dbReference type="Proteomes" id="UP000000803">
    <property type="component" value="Chromosome 2L"/>
</dbReference>
<dbReference type="Bgee" id="FBgn0041111">
    <property type="expression patterns" value="Expressed in dorsal appendage forming follicle cell in ovary and 266 other cell types or tissues"/>
</dbReference>
<dbReference type="ExpressionAtlas" id="Q9VQI9">
    <property type="expression patterns" value="baseline and differential"/>
</dbReference>
<dbReference type="GO" id="GO:0000791">
    <property type="term" value="C:euchromatin"/>
    <property type="evidence" value="ECO:0000314"/>
    <property type="project" value="UniProtKB"/>
</dbReference>
<dbReference type="GO" id="GO:0005634">
    <property type="term" value="C:nucleus"/>
    <property type="evidence" value="ECO:0000314"/>
    <property type="project" value="FlyBase"/>
</dbReference>
<dbReference type="GO" id="GO:0032783">
    <property type="term" value="C:super elongation complex"/>
    <property type="evidence" value="ECO:0000353"/>
    <property type="project" value="FlyBase"/>
</dbReference>
<dbReference type="GO" id="GO:0008023">
    <property type="term" value="C:transcription elongation factor complex"/>
    <property type="evidence" value="ECO:0000314"/>
    <property type="project" value="UniProtKB"/>
</dbReference>
<dbReference type="GO" id="GO:0003677">
    <property type="term" value="F:DNA binding"/>
    <property type="evidence" value="ECO:0007669"/>
    <property type="project" value="UniProtKB-KW"/>
</dbReference>
<dbReference type="GO" id="GO:0061629">
    <property type="term" value="F:RNA polymerase II-specific DNA-binding transcription factor binding"/>
    <property type="evidence" value="ECO:0000353"/>
    <property type="project" value="FlyBase"/>
</dbReference>
<dbReference type="GO" id="GO:0003712">
    <property type="term" value="F:transcription coregulator activity"/>
    <property type="evidence" value="ECO:0000315"/>
    <property type="project" value="UniProtKB"/>
</dbReference>
<dbReference type="GO" id="GO:0007611">
    <property type="term" value="P:learning or memory"/>
    <property type="evidence" value="ECO:0000315"/>
    <property type="project" value="FlyBase"/>
</dbReference>
<dbReference type="GO" id="GO:0097150">
    <property type="term" value="P:neuronal stem cell population maintenance"/>
    <property type="evidence" value="ECO:0000315"/>
    <property type="project" value="FlyBase"/>
</dbReference>
<dbReference type="GO" id="GO:0007366">
    <property type="term" value="P:periodic partitioning by pair rule gene"/>
    <property type="evidence" value="ECO:0000315"/>
    <property type="project" value="UniProtKB"/>
</dbReference>
<dbReference type="GO" id="GO:0045944">
    <property type="term" value="P:positive regulation of transcription by RNA polymerase II"/>
    <property type="evidence" value="ECO:0000315"/>
    <property type="project" value="FlyBase"/>
</dbReference>
<dbReference type="GO" id="GO:0051493">
    <property type="term" value="P:regulation of cytoskeleton organization"/>
    <property type="evidence" value="ECO:0000315"/>
    <property type="project" value="UniProtKB"/>
</dbReference>
<dbReference type="GO" id="GO:0006355">
    <property type="term" value="P:regulation of DNA-templated transcription"/>
    <property type="evidence" value="ECO:0000315"/>
    <property type="project" value="UniProtKB"/>
</dbReference>
<dbReference type="GO" id="GO:0010468">
    <property type="term" value="P:regulation of gene expression"/>
    <property type="evidence" value="ECO:0000318"/>
    <property type="project" value="GO_Central"/>
</dbReference>
<dbReference type="GO" id="GO:0032368">
    <property type="term" value="P:regulation of lipid transport"/>
    <property type="evidence" value="ECO:0000315"/>
    <property type="project" value="UniProtKB"/>
</dbReference>
<dbReference type="GO" id="GO:0007379">
    <property type="term" value="P:segment specification"/>
    <property type="evidence" value="ECO:0007001"/>
    <property type="project" value="FlyBase"/>
</dbReference>
<dbReference type="GO" id="GO:0048190">
    <property type="term" value="P:wing disc dorsal/ventral pattern formation"/>
    <property type="evidence" value="ECO:0000316"/>
    <property type="project" value="FlyBase"/>
</dbReference>
<dbReference type="InterPro" id="IPR007797">
    <property type="entry name" value="AF4/FMR2"/>
</dbReference>
<dbReference type="InterPro" id="IPR043640">
    <property type="entry name" value="AF4/FMR2_CHD"/>
</dbReference>
<dbReference type="PANTHER" id="PTHR10528">
    <property type="entry name" value="AF4/FMR2 FAMILY MEMBER"/>
    <property type="match status" value="1"/>
</dbReference>
<dbReference type="PANTHER" id="PTHR10528:SF17">
    <property type="entry name" value="AF4_FMR2 FAMILY MEMBER LILLI"/>
    <property type="match status" value="1"/>
</dbReference>
<dbReference type="Pfam" id="PF18876">
    <property type="entry name" value="AFF4_CHD"/>
    <property type="match status" value="1"/>
</dbReference>
<dbReference type="PROSITE" id="PS00354">
    <property type="entry name" value="HMGI_Y"/>
    <property type="match status" value="1"/>
</dbReference>
<evidence type="ECO:0000255" key="1"/>
<evidence type="ECO:0000256" key="2">
    <source>
        <dbReference type="SAM" id="MobiDB-lite"/>
    </source>
</evidence>
<evidence type="ECO:0000269" key="3">
    <source>
    </source>
</evidence>
<evidence type="ECO:0000269" key="4">
    <source>
    </source>
</evidence>
<evidence type="ECO:0000269" key="5">
    <source>
    </source>
</evidence>
<evidence type="ECO:0000269" key="6">
    <source>
    </source>
</evidence>
<evidence type="ECO:0000269" key="7">
    <source>
    </source>
</evidence>
<evidence type="ECO:0000269" key="8">
    <source>
    </source>
</evidence>
<evidence type="ECO:0000269" key="9">
    <source>
    </source>
</evidence>
<evidence type="ECO:0000269" key="10">
    <source>
    </source>
</evidence>
<evidence type="ECO:0000269" key="11">
    <source>
    </source>
</evidence>
<evidence type="ECO:0000303" key="12">
    <source>
    </source>
</evidence>
<evidence type="ECO:0000303" key="13">
    <source>
    </source>
</evidence>
<evidence type="ECO:0000303" key="14">
    <source>
    </source>
</evidence>
<evidence type="ECO:0000303" key="15">
    <source>
    </source>
</evidence>
<evidence type="ECO:0000303" key="16">
    <source>
    </source>
</evidence>
<evidence type="ECO:0000303" key="17">
    <source ref="5"/>
</evidence>
<evidence type="ECO:0000305" key="18"/>
<evidence type="ECO:0000312" key="19">
    <source>
        <dbReference type="EMBL" id="AAF51180.2"/>
    </source>
</evidence>
<evidence type="ECO:0000312" key="20">
    <source>
        <dbReference type="EMBL" id="AAG53639.1"/>
    </source>
</evidence>
<evidence type="ECO:0000312" key="21">
    <source>
        <dbReference type="EMBL" id="AAK18163.1"/>
    </source>
</evidence>
<evidence type="ECO:0000312" key="22">
    <source>
        <dbReference type="EMBL" id="AAL28786.1"/>
    </source>
</evidence>
<evidence type="ECO:0000312" key="23">
    <source>
        <dbReference type="EMBL" id="ACX54921.1"/>
    </source>
</evidence>
<evidence type="ECO:0000312" key="24">
    <source>
        <dbReference type="FlyBase" id="FBgn0041111"/>
    </source>
</evidence>
<protein>
    <recommendedName>
        <fullName evidence="18">AF4/FMR2 family member lilli</fullName>
    </recommendedName>
    <alternativeName>
        <fullName evidence="13">Protein lilliputian</fullName>
    </alternativeName>
    <alternativeName>
        <fullName evidence="14">Suppressor of Raf at 2A</fullName>
    </alternativeName>
    <alternativeName>
        <fullName evidence="16">Suppressor of sina 2-1</fullName>
    </alternativeName>
</protein>
<organism>
    <name type="scientific">Drosophila melanogaster</name>
    <name type="common">Fruit fly</name>
    <dbReference type="NCBI Taxonomy" id="7227"/>
    <lineage>
        <taxon>Eukaryota</taxon>
        <taxon>Metazoa</taxon>
        <taxon>Ecdysozoa</taxon>
        <taxon>Arthropoda</taxon>
        <taxon>Hexapoda</taxon>
        <taxon>Insecta</taxon>
        <taxon>Pterygota</taxon>
        <taxon>Neoptera</taxon>
        <taxon>Endopterygota</taxon>
        <taxon>Diptera</taxon>
        <taxon>Brachycera</taxon>
        <taxon>Muscomorpha</taxon>
        <taxon>Ephydroidea</taxon>
        <taxon>Drosophilidae</taxon>
        <taxon>Drosophila</taxon>
        <taxon>Sophophora</taxon>
    </lineage>
</organism>
<name>AFFL_DROME</name>
<proteinExistence type="evidence at protein level"/>
<comment type="function">
    <text evidence="4 5 9 10 11">Has a role in transcriptional regulation. Acts in parallel with the Ras/MAPK and the PI3K/PKB pathways in the control of cell identity and cellular growth. Essential for regulation of the cytoskeleton and cell growth but not for cell proliferation or growth rate. Required specifically for the microtubule-based basal transport of lipid droplets. Plays a partially redundant function downstream of Raf in cell fate specification in the developing eye. Pair-rule protein that regulates embryonic cellularization, gastrulation and segmentation.</text>
</comment>
<comment type="subunit">
    <text evidence="8">Component of the super elongation complex (SEC), at least composed of Ell, Cdk9, cyclin-T (CycT), lilli and ear.</text>
</comment>
<comment type="subcellular location">
    <subcellularLocation>
        <location evidence="4 8">Nucleus</location>
    </subcellularLocation>
    <text>Associates to transcriptionally active chromatin.</text>
</comment>
<comment type="alternative products">
    <event type="alternative splicing"/>
    <isoform>
        <id>Q9VQI9-1</id>
        <name evidence="3">A</name>
        <name evidence="3">B</name>
        <name evidence="3">C</name>
        <name evidence="3">G</name>
        <sequence type="displayed"/>
    </isoform>
    <isoform>
        <id>Q9VQI9-2</id>
        <name evidence="3">D</name>
        <name evidence="3">E</name>
        <name evidence="3">F</name>
        <sequence type="described" ref="VSP_039294"/>
    </isoform>
</comment>
<comment type="developmental stage">
    <text evidence="4 5">Expressed both maternally and zygotically.</text>
</comment>
<comment type="disruption phenotype">
    <text evidence="4 5">Embryos lacking maternal lilli show specific defects in the establishment of a functional cytoskeleton during cellularization, and exhibit a pair-rule segmentation phenotype. Adults lacking lilli exhibit reduction in cell and organ size and partial suppression of the increased growth associated with loss of PTEN function.</text>
</comment>
<comment type="similarity">
    <text evidence="1">Belongs to the AF4 family.</text>
</comment>
<comment type="sequence caution" evidence="18">
    <conflict type="erroneous initiation">
        <sequence resource="EMBL-CDS" id="AAL28786"/>
    </conflict>
    <text>Truncated N-terminus.</text>
</comment>
<comment type="sequence caution" evidence="18">
    <conflict type="frameshift">
        <sequence resource="EMBL-CDS" id="ACX54921"/>
    </conflict>
</comment>
<sequence length="1673" mass="180089">MAQQQQQQMQQQQQHHTSSINNNNSSSIVLLQQQQPQQQQQQLDQLQQYNNNLYSQNYNMEEYERRKRREREKIERQQGIQIDDRETSLFGEPRRLTEGDAEITAALGEFFEAREYINNQTVGISRSAPGAGNPRLQPNLAPQAKSLGHSPSSASSAAGPTAASATTSLPGQQQHYQQQQRPPTYVKQADNKPPYNGRGGYPGQPMKNDIPSSSGMAPPRGPPRTSSSNSNSSSVTNNASSGGVPASTPLGPPLSTQMPNGREKSFLGPPAPALHNGTGGRFVPPAASKRPGVGQQPPPPEKDVNKIISDIANIFTVQPLTLIAATPHAPTRENYNLLAPNRQKYAMDIPSSPPSAEPSSLMTPLFAPITSPIAPLVTTPPQASQMPLGGATSGTILAGEALAPLHQLPPTMPKAASGVTSPGPVKPLKTEKNHSLEKQDSCLENDLELSESEDEQRKKEGRSGGNSSNSSESDSSESGSESSSKNDLQHHPNHQQHHHQLQQQQQQQQATMQQQQVLQQQHRSQPLTSNGAQNKKFRHEIIARGSNTITGLLSSSGFGSGGNVGPAGVNSNAVVGTGSGSGGTLSSGGSSSNKTPSPTESNKWNLSRFFHKPANQTNSESVSPGNVSMKVPGILPGGAQIIPESIDVTTAIVKNEKNDMAMEEGEEEDDDEEQQLRYGGGLSVTPVAVKKEAIDAVSEMALGAIPKTQIKRESAETLLSARLSDSGTSASGSSSSSSSSSDSAMGGEVVPMPGPGETLQLPGVPAAITTVMRVQPTQSQKAPPSNSVTLTPILPLPTSPKQRQKKPRKKKAITSAPILDSSDDDEPPPKHPGLDHTAVSVQTQPATDTVKKGRGRPRKQQQSGGSGNLSSASAGSSSQTKGPTLTAAKKPLAKTPLAMSRARKREHSSQSSSNGNTPTKKVATPQLVAAPLKPTSNTAGSSSSDEDSSSSAESSSKSSSSSSSSDDTETQNTNCRIVKLNKTGAVQKKALLGSGSSSPSSSGSEAEDQTTRSQVGSGQALAQQLPPYKQLPISQHSQHLSSSDCSSSSGGCTAVCSSSSGEEDEGRREKERERKPKSDKNKINTLTRIFNPKEGGAKKQGQVVIVDLQEEQQQGKLDAAAQPSAPQAPPAAPAAIMAKPRMTPTQQQQLGAGLASPARTTTPHLTSLICKIDLSKLSRERIMRLKKLTPAQQNGHLTPKDQATNAVHVPNGYAGDTNPAAKVKHEHPVKPEPELDAGYEAKFKPGNVKQEFQLKQERDRDRERERERERERERDREREQPPGRRRKRSSSSSSSPYKEKKRKKEKADQLQMGKELLPVPVLLPSNNHERMPNHDRLSYDKLQLLHEDAAAVIGDVSAPNGSPTKKLLAMSPLPPPPTVTVAPATCNEAVQTTPPSATATSAIAPPVPATRLIYRSYFDRDVEHPSDDPRKNNQFLQEAINRKHAADLERDSFNQVTLYLEAVVYFLLTADAMERCSSEQATNTMYKDTLSLIKFISTKFRPYQQQSTTNIQHETHNKVAILSLRCQSLISLKLYKLRRKDCRAIINSLTDFFRVGRGDIANGNTPSSISPSNSVGSQGSGSNTPPGRIVPPDIHNMLCKQNEFLSYLNSAHELWDQADRLVRTGNHIDFIRELDHENGPLTLHSTMHEVFRYVQAGLKTLRDAVSHPTHQSQ</sequence>
<feature type="chain" id="PRO_0000394675" description="AF4/FMR2 family member lilli">
    <location>
        <begin position="1"/>
        <end position="1673"/>
    </location>
</feature>
<feature type="DNA-binding region" description="A.T hook" evidence="1">
    <location>
        <begin position="851"/>
        <end position="863"/>
    </location>
</feature>
<feature type="region of interest" description="Disordered" evidence="2">
    <location>
        <begin position="1"/>
        <end position="24"/>
    </location>
</feature>
<feature type="region of interest" description="Disordered" evidence="2">
    <location>
        <begin position="54"/>
        <end position="80"/>
    </location>
</feature>
<feature type="region of interest" description="Disordered" evidence="2">
    <location>
        <begin position="125"/>
        <end position="302"/>
    </location>
</feature>
<feature type="region of interest" description="Disordered" evidence="2">
    <location>
        <begin position="407"/>
        <end position="534"/>
    </location>
</feature>
<feature type="region of interest" description="Disordered" evidence="2">
    <location>
        <begin position="575"/>
        <end position="604"/>
    </location>
</feature>
<feature type="region of interest" description="Disordered" evidence="2">
    <location>
        <begin position="722"/>
        <end position="1086"/>
    </location>
</feature>
<feature type="region of interest" description="Disordered" evidence="2">
    <location>
        <begin position="1114"/>
        <end position="1133"/>
    </location>
</feature>
<feature type="region of interest" description="Disordered" evidence="2">
    <location>
        <begin position="1141"/>
        <end position="1160"/>
    </location>
</feature>
<feature type="region of interest" description="Disordered" evidence="2">
    <location>
        <begin position="1187"/>
        <end position="1315"/>
    </location>
</feature>
<feature type="region of interest" description="Disordered" evidence="2">
    <location>
        <begin position="1564"/>
        <end position="1588"/>
    </location>
</feature>
<feature type="compositionally biased region" description="Basic and acidic residues" evidence="2">
    <location>
        <begin position="71"/>
        <end position="80"/>
    </location>
</feature>
<feature type="compositionally biased region" description="Low complexity" evidence="2">
    <location>
        <begin position="146"/>
        <end position="180"/>
    </location>
</feature>
<feature type="compositionally biased region" description="Low complexity" evidence="2">
    <location>
        <begin position="223"/>
        <end position="244"/>
    </location>
</feature>
<feature type="compositionally biased region" description="Basic and acidic residues" evidence="2">
    <location>
        <begin position="428"/>
        <end position="441"/>
    </location>
</feature>
<feature type="compositionally biased region" description="Acidic residues" evidence="2">
    <location>
        <begin position="443"/>
        <end position="454"/>
    </location>
</feature>
<feature type="compositionally biased region" description="Low complexity" evidence="2">
    <location>
        <begin position="465"/>
        <end position="486"/>
    </location>
</feature>
<feature type="compositionally biased region" description="Basic residues" evidence="2">
    <location>
        <begin position="491"/>
        <end position="500"/>
    </location>
</feature>
<feature type="compositionally biased region" description="Low complexity" evidence="2">
    <location>
        <begin position="501"/>
        <end position="525"/>
    </location>
</feature>
<feature type="compositionally biased region" description="Gly residues" evidence="2">
    <location>
        <begin position="577"/>
        <end position="586"/>
    </location>
</feature>
<feature type="compositionally biased region" description="Polar residues" evidence="2">
    <location>
        <begin position="594"/>
        <end position="604"/>
    </location>
</feature>
<feature type="compositionally biased region" description="Low complexity" evidence="2">
    <location>
        <begin position="724"/>
        <end position="757"/>
    </location>
</feature>
<feature type="compositionally biased region" description="Polar residues" evidence="2">
    <location>
        <begin position="775"/>
        <end position="788"/>
    </location>
</feature>
<feature type="compositionally biased region" description="Basic residues" evidence="2">
    <location>
        <begin position="802"/>
        <end position="812"/>
    </location>
</feature>
<feature type="compositionally biased region" description="Low complexity" evidence="2">
    <location>
        <begin position="860"/>
        <end position="898"/>
    </location>
</feature>
<feature type="compositionally biased region" description="Polar residues" evidence="2">
    <location>
        <begin position="909"/>
        <end position="919"/>
    </location>
</feature>
<feature type="compositionally biased region" description="Low complexity" evidence="2">
    <location>
        <begin position="949"/>
        <end position="965"/>
    </location>
</feature>
<feature type="compositionally biased region" description="Low complexity" evidence="2">
    <location>
        <begin position="993"/>
        <end position="1004"/>
    </location>
</feature>
<feature type="compositionally biased region" description="Polar residues" evidence="2">
    <location>
        <begin position="1011"/>
        <end position="1022"/>
    </location>
</feature>
<feature type="compositionally biased region" description="Low complexity" evidence="2">
    <location>
        <begin position="1034"/>
        <end position="1060"/>
    </location>
</feature>
<feature type="compositionally biased region" description="Basic and acidic residues" evidence="2">
    <location>
        <begin position="1065"/>
        <end position="1082"/>
    </location>
</feature>
<feature type="compositionally biased region" description="Polar residues" evidence="2">
    <location>
        <begin position="1190"/>
        <end position="1205"/>
    </location>
</feature>
<feature type="compositionally biased region" description="Basic and acidic residues" evidence="2">
    <location>
        <begin position="1226"/>
        <end position="1243"/>
    </location>
</feature>
<feature type="compositionally biased region" description="Basic and acidic residues" evidence="2">
    <location>
        <begin position="1252"/>
        <end position="1282"/>
    </location>
</feature>
<feature type="compositionally biased region" description="Low complexity" evidence="2">
    <location>
        <begin position="1564"/>
        <end position="1583"/>
    </location>
</feature>
<feature type="modified residue" description="Phosphothreonine" evidence="7">
    <location>
        <position position="420"/>
    </location>
</feature>
<feature type="modified residue" description="Phosphoserine" evidence="7">
    <location>
        <position position="450"/>
    </location>
</feature>
<feature type="modified residue" description="Phosphoserine" evidence="7">
    <location>
        <position position="452"/>
    </location>
</feature>
<feature type="modified residue" description="Phosphoserine" evidence="7">
    <location>
        <position position="821"/>
    </location>
</feature>
<feature type="modified residue" description="Phosphoserine" evidence="7">
    <location>
        <position position="822"/>
    </location>
</feature>
<feature type="modified residue" description="Phosphoserine" evidence="7">
    <location>
        <position position="871"/>
    </location>
</feature>
<feature type="modified residue" description="Phosphoserine" evidence="7">
    <location>
        <position position="873"/>
    </location>
</feature>
<feature type="modified residue" description="Phosphoserine" evidence="7">
    <location>
        <position position="1362"/>
    </location>
</feature>
<feature type="modified residue" description="Phosphothreonine" evidence="7">
    <location>
        <position position="1364"/>
    </location>
</feature>
<feature type="splice variant" id="VSP_039294" description="In isoform D." evidence="12 17">
    <location>
        <begin position="1"/>
        <end position="59"/>
    </location>
</feature>
<feature type="sequence conflict" description="In Ref. 5; ACX54921." evidence="18" ref="5">
    <original>V</original>
    <variation>A</variation>
    <location>
        <position position="235"/>
    </location>
</feature>
<feature type="sequence conflict" description="In Ref. 5; ACX54921." evidence="18" ref="5">
    <original>L</original>
    <variation>M</variation>
    <location>
        <position position="254"/>
    </location>
</feature>
<feature type="sequence conflict" description="In Ref. 5; ACX54921." evidence="18" ref="5">
    <original>A</original>
    <variation>T</variation>
    <location>
        <position position="614"/>
    </location>
</feature>
<feature type="sequence conflict" description="In Ref. 5; ACX54921." evidence="18" ref="5">
    <original>D</original>
    <variation>I</variation>
    <location>
        <position position="1201"/>
    </location>
</feature>